<dbReference type="EC" id="2.7.1.33" evidence="1"/>
<dbReference type="EMBL" id="CP000056">
    <property type="protein sequence ID" value="AAX72030.1"/>
    <property type="molecule type" value="Genomic_DNA"/>
</dbReference>
<dbReference type="RefSeq" id="WP_010922353.1">
    <property type="nucleotide sequence ID" value="NC_007296.2"/>
</dbReference>
<dbReference type="SMR" id="Q48TD0"/>
<dbReference type="GeneID" id="69900800"/>
<dbReference type="KEGG" id="spb:M28_Spy0917"/>
<dbReference type="HOGENOM" id="CLU_053818_1_1_9"/>
<dbReference type="UniPathway" id="UPA00241">
    <property type="reaction ID" value="UER00352"/>
</dbReference>
<dbReference type="GO" id="GO:0005737">
    <property type="term" value="C:cytoplasm"/>
    <property type="evidence" value="ECO:0007669"/>
    <property type="project" value="UniProtKB-SubCell"/>
</dbReference>
<dbReference type="GO" id="GO:0005524">
    <property type="term" value="F:ATP binding"/>
    <property type="evidence" value="ECO:0007669"/>
    <property type="project" value="UniProtKB-UniRule"/>
</dbReference>
<dbReference type="GO" id="GO:0004594">
    <property type="term" value="F:pantothenate kinase activity"/>
    <property type="evidence" value="ECO:0007669"/>
    <property type="project" value="UniProtKB-UniRule"/>
</dbReference>
<dbReference type="GO" id="GO:0015937">
    <property type="term" value="P:coenzyme A biosynthetic process"/>
    <property type="evidence" value="ECO:0007669"/>
    <property type="project" value="UniProtKB-UniRule"/>
</dbReference>
<dbReference type="CDD" id="cd02025">
    <property type="entry name" value="PanK"/>
    <property type="match status" value="1"/>
</dbReference>
<dbReference type="Gene3D" id="3.40.50.300">
    <property type="entry name" value="P-loop containing nucleotide triphosphate hydrolases"/>
    <property type="match status" value="1"/>
</dbReference>
<dbReference type="HAMAP" id="MF_00215">
    <property type="entry name" value="Pantothen_kinase_1"/>
    <property type="match status" value="1"/>
</dbReference>
<dbReference type="InterPro" id="IPR027417">
    <property type="entry name" value="P-loop_NTPase"/>
</dbReference>
<dbReference type="InterPro" id="IPR004566">
    <property type="entry name" value="PanK"/>
</dbReference>
<dbReference type="InterPro" id="IPR006083">
    <property type="entry name" value="PRK/URK"/>
</dbReference>
<dbReference type="NCBIfam" id="TIGR00554">
    <property type="entry name" value="panK_bact"/>
    <property type="match status" value="1"/>
</dbReference>
<dbReference type="PANTHER" id="PTHR10285">
    <property type="entry name" value="URIDINE KINASE"/>
    <property type="match status" value="1"/>
</dbReference>
<dbReference type="Pfam" id="PF00485">
    <property type="entry name" value="PRK"/>
    <property type="match status" value="1"/>
</dbReference>
<dbReference type="PIRSF" id="PIRSF000545">
    <property type="entry name" value="Pantothenate_kin"/>
    <property type="match status" value="1"/>
</dbReference>
<dbReference type="SUPFAM" id="SSF52540">
    <property type="entry name" value="P-loop containing nucleoside triphosphate hydrolases"/>
    <property type="match status" value="1"/>
</dbReference>
<proteinExistence type="inferred from homology"/>
<protein>
    <recommendedName>
        <fullName evidence="1">Pantothenate kinase</fullName>
        <ecNumber evidence="1">2.7.1.33</ecNumber>
    </recommendedName>
    <alternativeName>
        <fullName evidence="1">Pantothenic acid kinase</fullName>
    </alternativeName>
</protein>
<comment type="catalytic activity">
    <reaction evidence="1">
        <text>(R)-pantothenate + ATP = (R)-4'-phosphopantothenate + ADP + H(+)</text>
        <dbReference type="Rhea" id="RHEA:16373"/>
        <dbReference type="ChEBI" id="CHEBI:10986"/>
        <dbReference type="ChEBI" id="CHEBI:15378"/>
        <dbReference type="ChEBI" id="CHEBI:29032"/>
        <dbReference type="ChEBI" id="CHEBI:30616"/>
        <dbReference type="ChEBI" id="CHEBI:456216"/>
        <dbReference type="EC" id="2.7.1.33"/>
    </reaction>
</comment>
<comment type="pathway">
    <text evidence="1">Cofactor biosynthesis; coenzyme A biosynthesis; CoA from (R)-pantothenate: step 1/5.</text>
</comment>
<comment type="subcellular location">
    <subcellularLocation>
        <location evidence="1">Cytoplasm</location>
    </subcellularLocation>
</comment>
<comment type="similarity">
    <text evidence="1">Belongs to the prokaryotic pantothenate kinase family.</text>
</comment>
<keyword id="KW-0067">ATP-binding</keyword>
<keyword id="KW-0173">Coenzyme A biosynthesis</keyword>
<keyword id="KW-0963">Cytoplasm</keyword>
<keyword id="KW-0418">Kinase</keyword>
<keyword id="KW-0547">Nucleotide-binding</keyword>
<keyword id="KW-0808">Transferase</keyword>
<gene>
    <name evidence="1" type="primary">coaA</name>
    <name type="ordered locus">M28_Spy0917</name>
</gene>
<organism>
    <name type="scientific">Streptococcus pyogenes serotype M28 (strain MGAS6180)</name>
    <dbReference type="NCBI Taxonomy" id="319701"/>
    <lineage>
        <taxon>Bacteria</taxon>
        <taxon>Bacillati</taxon>
        <taxon>Bacillota</taxon>
        <taxon>Bacilli</taxon>
        <taxon>Lactobacillales</taxon>
        <taxon>Streptococcaceae</taxon>
        <taxon>Streptococcus</taxon>
    </lineage>
</organism>
<name>COAA_STRPM</name>
<feature type="chain" id="PRO_1000043267" description="Pantothenate kinase">
    <location>
        <begin position="1"/>
        <end position="306"/>
    </location>
</feature>
<feature type="binding site" evidence="1">
    <location>
        <begin position="91"/>
        <end position="98"/>
    </location>
    <ligand>
        <name>ATP</name>
        <dbReference type="ChEBI" id="CHEBI:30616"/>
    </ligand>
</feature>
<sequence length="306" mass="35610">MSNEFINFEKISRESWKTLHQKAKALLTQEELKSITSLNDNISINDVIDIYLPLINLIQVYKIAQENLSFSKSLFLKKDIQLRPFIIGISGSVAVGKSTTSRLLQLLLSRTHPNSQVELVTTDGFLYPNQFLIEQGLLNRKGFPESYNMELLLDFLDSIKNGQTAFAPVYSHDIYDIIPNQKQSFNNPDFLIVEGINVFQNQQNNRLYMSDYFDFSIYIDADSSHIETWYIERFLSILKLAKRDPHNYYAQYAQLPRSEAIAFARNVWKTVNLENLEKFIEPTRNRAELILHKSADHKIDEIYLKK</sequence>
<accession>Q48TD0</accession>
<evidence type="ECO:0000255" key="1">
    <source>
        <dbReference type="HAMAP-Rule" id="MF_00215"/>
    </source>
</evidence>
<reference key="1">
    <citation type="journal article" date="2005" name="J. Infect. Dis.">
        <title>Genome sequence of a serotype M28 strain of group A Streptococcus: potential new insights into puerperal sepsis and bacterial disease specificity.</title>
        <authorList>
            <person name="Green N.M."/>
            <person name="Zhang S."/>
            <person name="Porcella S.F."/>
            <person name="Nagiec M.J."/>
            <person name="Barbian K.D."/>
            <person name="Beres S.B."/>
            <person name="Lefebvre R.B."/>
            <person name="Musser J.M."/>
        </authorList>
    </citation>
    <scope>NUCLEOTIDE SEQUENCE [LARGE SCALE GENOMIC DNA]</scope>
    <source>
        <strain>MGAS6180</strain>
    </source>
</reference>